<organism>
    <name type="scientific">Escherichia coli O17:K52:H18 (strain UMN026 / ExPEC)</name>
    <dbReference type="NCBI Taxonomy" id="585056"/>
    <lineage>
        <taxon>Bacteria</taxon>
        <taxon>Pseudomonadati</taxon>
        <taxon>Pseudomonadota</taxon>
        <taxon>Gammaproteobacteria</taxon>
        <taxon>Enterobacterales</taxon>
        <taxon>Enterobacteriaceae</taxon>
        <taxon>Escherichia</taxon>
    </lineage>
</organism>
<gene>
    <name evidence="1" type="primary">wecG</name>
    <name evidence="1" type="synonym">rffM</name>
    <name type="ordered locus">ECUMN_4320</name>
</gene>
<name>WECG_ECOLU</name>
<feature type="chain" id="PRO_1000134576" description="UDP-N-acetyl-D-mannosaminuronic acid transferase">
    <location>
        <begin position="1"/>
        <end position="246"/>
    </location>
</feature>
<reference key="1">
    <citation type="journal article" date="2009" name="PLoS Genet.">
        <title>Organised genome dynamics in the Escherichia coli species results in highly diverse adaptive paths.</title>
        <authorList>
            <person name="Touchon M."/>
            <person name="Hoede C."/>
            <person name="Tenaillon O."/>
            <person name="Barbe V."/>
            <person name="Baeriswyl S."/>
            <person name="Bidet P."/>
            <person name="Bingen E."/>
            <person name="Bonacorsi S."/>
            <person name="Bouchier C."/>
            <person name="Bouvet O."/>
            <person name="Calteau A."/>
            <person name="Chiapello H."/>
            <person name="Clermont O."/>
            <person name="Cruveiller S."/>
            <person name="Danchin A."/>
            <person name="Diard M."/>
            <person name="Dossat C."/>
            <person name="Karoui M.E."/>
            <person name="Frapy E."/>
            <person name="Garry L."/>
            <person name="Ghigo J.M."/>
            <person name="Gilles A.M."/>
            <person name="Johnson J."/>
            <person name="Le Bouguenec C."/>
            <person name="Lescat M."/>
            <person name="Mangenot S."/>
            <person name="Martinez-Jehanne V."/>
            <person name="Matic I."/>
            <person name="Nassif X."/>
            <person name="Oztas S."/>
            <person name="Petit M.A."/>
            <person name="Pichon C."/>
            <person name="Rouy Z."/>
            <person name="Ruf C.S."/>
            <person name="Schneider D."/>
            <person name="Tourret J."/>
            <person name="Vacherie B."/>
            <person name="Vallenet D."/>
            <person name="Medigue C."/>
            <person name="Rocha E.P.C."/>
            <person name="Denamur E."/>
        </authorList>
    </citation>
    <scope>NUCLEOTIDE SEQUENCE [LARGE SCALE GENOMIC DNA]</scope>
    <source>
        <strain>UMN026 / ExPEC</strain>
    </source>
</reference>
<accession>B7NFA0</accession>
<evidence type="ECO:0000255" key="1">
    <source>
        <dbReference type="HAMAP-Rule" id="MF_01001"/>
    </source>
</evidence>
<keyword id="KW-0328">Glycosyltransferase</keyword>
<keyword id="KW-0808">Transferase</keyword>
<sequence>MNNNTTAPTYTLRGLQLIGWRDMQHALDYLFADGQLKQGTLVAINAEKMLTIEDNAEVRELINAAEFKYADGISVVRSVRKKYPQAQVSRVAGADLWEELMARAGKEGTPVFLVGGKPEVLAQTEAKLRNQWNVNIVGSQDGYFKPEQRQALFERIHASGAQIVTVAMGSPKQEIFMRDCRLVHPDALYMGVGGTYDVFTGHVKRAPKIWQTLGLEWLYRLLSQPSRIKRQLRLLRYLRWHYTGNL</sequence>
<comment type="function">
    <text evidence="1">Catalyzes the synthesis of Und-PP-GlcNAc-ManNAcA (Lipid II), the second lipid-linked intermediate involved in enterobacterial common antigen (ECA) synthesis.</text>
</comment>
<comment type="catalytic activity">
    <reaction evidence="1">
        <text>UDP-N-acetyl-alpha-D-mannosaminouronate + N-acetyl-alpha-D-glucosaminyl-di-trans,octa-cis-undecaprenyl diphosphate = beta-D-ManNAcA-(1-&gt;4)-alpha-D-GlcNAc-di-trans,octa-cis-undecaprenyl diphosphate + UDP + H(+)</text>
        <dbReference type="Rhea" id="RHEA:28366"/>
        <dbReference type="ChEBI" id="CHEBI:15378"/>
        <dbReference type="ChEBI" id="CHEBI:58223"/>
        <dbReference type="ChEBI" id="CHEBI:61495"/>
        <dbReference type="ChEBI" id="CHEBI:62959"/>
        <dbReference type="ChEBI" id="CHEBI:70731"/>
        <dbReference type="EC" id="2.4.1.180"/>
    </reaction>
</comment>
<comment type="pathway">
    <text evidence="1">Bacterial outer membrane biogenesis; enterobacterial common antigen biosynthesis.</text>
</comment>
<comment type="similarity">
    <text evidence="1">Belongs to the glycosyltransferase 26 family.</text>
</comment>
<protein>
    <recommendedName>
        <fullName evidence="1">UDP-N-acetyl-D-mannosaminuronic acid transferase</fullName>
        <shortName evidence="1">UDP-ManNAcA transferase</shortName>
        <ecNumber evidence="1">2.4.1.180</ecNumber>
    </recommendedName>
</protein>
<proteinExistence type="inferred from homology"/>
<dbReference type="EC" id="2.4.1.180" evidence="1"/>
<dbReference type="EMBL" id="CU928163">
    <property type="protein sequence ID" value="CAR15455.1"/>
    <property type="molecule type" value="Genomic_DNA"/>
</dbReference>
<dbReference type="RefSeq" id="WP_001064038.1">
    <property type="nucleotide sequence ID" value="NC_011751.1"/>
</dbReference>
<dbReference type="RefSeq" id="YP_002414951.1">
    <property type="nucleotide sequence ID" value="NC_011751.1"/>
</dbReference>
<dbReference type="SMR" id="B7NFA0"/>
<dbReference type="STRING" id="585056.ECUMN_4320"/>
<dbReference type="CAZy" id="GT26">
    <property type="family name" value="Glycosyltransferase Family 26"/>
</dbReference>
<dbReference type="GeneID" id="93778149"/>
<dbReference type="KEGG" id="eum:ECUMN_4320"/>
<dbReference type="PATRIC" id="fig|585056.7.peg.4486"/>
<dbReference type="HOGENOM" id="CLU_063203_3_2_6"/>
<dbReference type="UniPathway" id="UPA00566"/>
<dbReference type="Proteomes" id="UP000007097">
    <property type="component" value="Chromosome"/>
</dbReference>
<dbReference type="GO" id="GO:0047241">
    <property type="term" value="F:lipopolysaccharide N-acetylmannosaminouronosyltransferase activity"/>
    <property type="evidence" value="ECO:0007669"/>
    <property type="project" value="UniProtKB-UniRule"/>
</dbReference>
<dbReference type="GO" id="GO:0009246">
    <property type="term" value="P:enterobacterial common antigen biosynthetic process"/>
    <property type="evidence" value="ECO:0007669"/>
    <property type="project" value="UniProtKB-UniRule"/>
</dbReference>
<dbReference type="CDD" id="cd06533">
    <property type="entry name" value="Glyco_transf_WecG_TagA"/>
    <property type="match status" value="1"/>
</dbReference>
<dbReference type="HAMAP" id="MF_01001">
    <property type="entry name" value="WecG_RffM"/>
    <property type="match status" value="1"/>
</dbReference>
<dbReference type="InterPro" id="IPR023085">
    <property type="entry name" value="UDP-ManNAcA_Trfase_WecG"/>
</dbReference>
<dbReference type="InterPro" id="IPR004629">
    <property type="entry name" value="WecG_TagA_CpsF"/>
</dbReference>
<dbReference type="NCBIfam" id="NF002980">
    <property type="entry name" value="PRK03692.1"/>
    <property type="match status" value="1"/>
</dbReference>
<dbReference type="NCBIfam" id="TIGR00696">
    <property type="entry name" value="wecG_tagA_cpsF"/>
    <property type="match status" value="1"/>
</dbReference>
<dbReference type="PANTHER" id="PTHR34136">
    <property type="match status" value="1"/>
</dbReference>
<dbReference type="PANTHER" id="PTHR34136:SF1">
    <property type="entry name" value="UDP-N-ACETYL-D-MANNOSAMINURONIC ACID TRANSFERASE"/>
    <property type="match status" value="1"/>
</dbReference>
<dbReference type="Pfam" id="PF03808">
    <property type="entry name" value="Glyco_tran_WecG"/>
    <property type="match status" value="1"/>
</dbReference>